<accession>Q5YTV5</accession>
<name>ROX_NOCFA</name>
<protein>
    <recommendedName>
        <fullName evidence="4">Rifampicin monooxygenase</fullName>
        <shortName evidence="4">RIFMO</shortName>
        <ecNumber evidence="3">1.14.13.211</ecNumber>
    </recommendedName>
</protein>
<organism>
    <name type="scientific">Nocardia farcinica (strain IFM 10152)</name>
    <dbReference type="NCBI Taxonomy" id="247156"/>
    <lineage>
        <taxon>Bacteria</taxon>
        <taxon>Bacillati</taxon>
        <taxon>Actinomycetota</taxon>
        <taxon>Actinomycetes</taxon>
        <taxon>Mycobacteriales</taxon>
        <taxon>Nocardiaceae</taxon>
        <taxon>Nocardia</taxon>
    </lineage>
</organism>
<reference key="1">
    <citation type="journal article" date="2004" name="Proc. Natl. Acad. Sci. U.S.A.">
        <title>The complete genomic sequence of Nocardia farcinica IFM 10152.</title>
        <authorList>
            <person name="Ishikawa J."/>
            <person name="Yamashita A."/>
            <person name="Mikami Y."/>
            <person name="Hoshino Y."/>
            <person name="Kurita H."/>
            <person name="Hotta K."/>
            <person name="Shiba T."/>
            <person name="Hattori M."/>
        </authorList>
    </citation>
    <scope>NUCLEOTIDE SEQUENCE [LARGE SCALE GENOMIC DNA]</scope>
    <source>
        <strain>IFM 10152</strain>
    </source>
</reference>
<reference key="2">
    <citation type="journal article" date="2010" name="J. Antibiot.">
        <title>Monooxygenation of rifampicin catalyzed by the rox gene product of Nocardia farcinica: structure elucidation, gene identification and role in drug resistance.</title>
        <authorList>
            <person name="Hoshino Y."/>
            <person name="Fujii S."/>
            <person name="Shinonaga H."/>
            <person name="Arai K."/>
            <person name="Saito F."/>
            <person name="Fukai T."/>
            <person name="Satoh H."/>
            <person name="Miyazaki Y."/>
            <person name="Ishikawa J."/>
        </authorList>
    </citation>
    <scope>FUNCTION</scope>
    <scope>DISRUPTION PHENOTYPE</scope>
    <source>
        <strain>IFM 10152</strain>
    </source>
</reference>
<reference evidence="7 8" key="3">
    <citation type="journal article" date="2016" name="J. Biol. Chem.">
        <title>The Structure of the Antibiotic Deactivating, N-hydroxylating Rifampicin Monooxygenase.</title>
        <authorList>
            <person name="Liu L.K."/>
            <person name="Abdelwahab H."/>
            <person name="Martin Del Campo J.S."/>
            <person name="Mehra-Chaudhary R."/>
            <person name="Sobrado P."/>
            <person name="Tanner J.J."/>
        </authorList>
    </citation>
    <scope>X-RAY CRYSTALLOGRAPHY (1.80 ANGSTROMS) IN COMPLEXES WITH FAD AND RIFAMPICIN</scope>
    <scope>SUBUNIT</scope>
    <scope>COFACTOR</scope>
    <scope>DOMAIN</scope>
    <source>
        <strain>IFM 10152</strain>
    </source>
</reference>
<reference evidence="9" key="4">
    <citation type="journal article" date="2018" name="Biochemistry">
        <title>Structural Evidence for Rifampicin Monooxygenase Inactivating Rifampicin by Cleaving Its Ansa-Bridge.</title>
        <authorList>
            <person name="Liu L.K."/>
            <person name="Dai Y."/>
            <person name="Abdelwahab H."/>
            <person name="Sobrado P."/>
            <person name="Tanner J.J."/>
        </authorList>
    </citation>
    <scope>X-RAY CRYSTALLOGRAPHY (2.10 ANGSTROMS) IN COMPLEX WITH FAD AND 2-HYDROXYL-RIFAMPICIN</scope>
    <scope>FUNCTION</scope>
    <scope>CATALYTIC ACTIVITY</scope>
    <scope>COFACTOR</scope>
</reference>
<evidence type="ECO:0000269" key="1">
    <source>
    </source>
</evidence>
<evidence type="ECO:0000269" key="2">
    <source>
    </source>
</evidence>
<evidence type="ECO:0000269" key="3">
    <source>
    </source>
</evidence>
<evidence type="ECO:0000303" key="4">
    <source>
    </source>
</evidence>
<evidence type="ECO:0000305" key="5"/>
<evidence type="ECO:0000305" key="6">
    <source>
    </source>
</evidence>
<evidence type="ECO:0007744" key="7">
    <source>
        <dbReference type="PDB" id="5KOW"/>
    </source>
</evidence>
<evidence type="ECO:0007744" key="8">
    <source>
        <dbReference type="PDB" id="5KOX"/>
    </source>
</evidence>
<evidence type="ECO:0007744" key="9">
    <source>
        <dbReference type="PDB" id="6C7S"/>
    </source>
</evidence>
<evidence type="ECO:0007829" key="10">
    <source>
        <dbReference type="PDB" id="5KOW"/>
    </source>
</evidence>
<evidence type="ECO:0007829" key="11">
    <source>
        <dbReference type="PDB" id="5KOX"/>
    </source>
</evidence>
<sequence length="473" mass="51364">MIDVIIAGGGPTGLMLAGELRLHGVRTVVLEKEPTPNQHSRSRGLHARSIEVMDQRGLLERFLAHGEQFRVGGFFAGLAAEWPADLDTAHSYVLAIPQVVTERLLTEHATELGAEIRRGCEVAGLDQDADGVTAELADGTRLRARYLVGCDGGRSTVRRLLGVDFPGEPTRVETLLADVRIDVPVETLTAVVAEVRKTQLRFGAVPAGDGFFRLIVPAQGLSADRAAPTLDELKRCLHATAGTDFGVHSPRWLSRFGDATRLAERYRTGRVLLAGDAAHIHPPTGGQGLNLGIQDAFNLGWKLAAAIGGWAPPDLLDSYHDERHPVAAEVLDNTRAQMTLLSLDPGPRAVRRLMAELVEFPDVNRHLIEKITAIAVRYDLGDGHDLVGRRLRDIPLTEGRLYERMRGGRGLLLDRTGRLSVSGWSDRVDHLADPGAALDVPAALLRPDGHVAWVGEDQDDLLAHLPRWFGAAT</sequence>
<keyword id="KW-0002">3D-structure</keyword>
<keyword id="KW-0274">FAD</keyword>
<keyword id="KW-0285">Flavoprotein</keyword>
<keyword id="KW-0503">Monooxygenase</keyword>
<keyword id="KW-0547">Nucleotide-binding</keyword>
<keyword id="KW-0560">Oxidoreductase</keyword>
<keyword id="KW-1185">Reference proteome</keyword>
<feature type="chain" id="PRO_0000446368" description="Rifampicin monooxygenase">
    <location>
        <begin position="1"/>
        <end position="473"/>
    </location>
</feature>
<feature type="binding site" evidence="2 3 7 8 9">
    <location>
        <position position="12"/>
    </location>
    <ligand>
        <name>FAD</name>
        <dbReference type="ChEBI" id="CHEBI:57692"/>
    </ligand>
</feature>
<feature type="binding site" evidence="2 3 7 8 9">
    <location>
        <position position="31"/>
    </location>
    <ligand>
        <name>FAD</name>
        <dbReference type="ChEBI" id="CHEBI:57692"/>
    </ligand>
</feature>
<feature type="binding site" evidence="2 3 7 8 9">
    <location>
        <position position="32"/>
    </location>
    <ligand>
        <name>FAD</name>
        <dbReference type="ChEBI" id="CHEBI:57692"/>
    </ligand>
</feature>
<feature type="binding site" evidence="2 3 7 8 9">
    <location>
        <position position="41"/>
    </location>
    <ligand>
        <name>FAD</name>
        <dbReference type="ChEBI" id="CHEBI:57692"/>
    </ligand>
</feature>
<feature type="binding site" evidence="2 3 8 9">
    <location>
        <position position="43"/>
    </location>
    <ligand>
        <name>rifampicin</name>
        <dbReference type="ChEBI" id="CHEBI:71365"/>
    </ligand>
</feature>
<feature type="binding site" evidence="2 3 7 8 9">
    <location>
        <position position="98"/>
    </location>
    <ligand>
        <name>FAD</name>
        <dbReference type="ChEBI" id="CHEBI:57692"/>
    </ligand>
</feature>
<feature type="binding site" evidence="2 3 7 8 9">
    <location>
        <position position="122"/>
    </location>
    <ligand>
        <name>FAD</name>
        <dbReference type="ChEBI" id="CHEBI:57692"/>
    </ligand>
</feature>
<feature type="binding site" evidence="2 3 7 8 9">
    <location>
        <position position="156"/>
    </location>
    <ligand>
        <name>FAD</name>
        <dbReference type="ChEBI" id="CHEBI:57692"/>
    </ligand>
</feature>
<feature type="binding site" evidence="3 9">
    <location>
        <position position="196"/>
    </location>
    <ligand>
        <name>rifampicin</name>
        <dbReference type="ChEBI" id="CHEBI:71365"/>
    </ligand>
</feature>
<feature type="binding site" evidence="2 3 7 8 9">
    <location>
        <position position="276"/>
    </location>
    <ligand>
        <name>FAD</name>
        <dbReference type="ChEBI" id="CHEBI:57692"/>
    </ligand>
</feature>
<feature type="binding site" evidence="2 3 8 9">
    <location>
        <position position="285"/>
    </location>
    <ligand>
        <name>rifampicin</name>
        <dbReference type="ChEBI" id="CHEBI:71365"/>
    </ligand>
</feature>
<feature type="binding site" evidence="2 3 7 8 9">
    <location>
        <position position="289"/>
    </location>
    <ligand>
        <name>FAD</name>
        <dbReference type="ChEBI" id="CHEBI:57692"/>
    </ligand>
</feature>
<feature type="binding site" evidence="2 3 7 8 9">
    <location>
        <position position="290"/>
    </location>
    <ligand>
        <name>FAD</name>
        <dbReference type="ChEBI" id="CHEBI:57692"/>
    </ligand>
</feature>
<feature type="strand" evidence="11">
    <location>
        <begin position="2"/>
        <end position="7"/>
    </location>
</feature>
<feature type="helix" evidence="11">
    <location>
        <begin position="11"/>
        <end position="21"/>
    </location>
</feature>
<feature type="turn" evidence="11">
    <location>
        <begin position="22"/>
        <end position="24"/>
    </location>
</feature>
<feature type="strand" evidence="11">
    <location>
        <begin position="27"/>
        <end position="32"/>
    </location>
</feature>
<feature type="helix" evidence="11">
    <location>
        <begin position="47"/>
        <end position="55"/>
    </location>
</feature>
<feature type="helix" evidence="11">
    <location>
        <begin position="59"/>
        <end position="63"/>
    </location>
</feature>
<feature type="strand" evidence="11">
    <location>
        <begin position="66"/>
        <end position="69"/>
    </location>
</feature>
<feature type="turn" evidence="11">
    <location>
        <begin position="74"/>
        <end position="77"/>
    </location>
</feature>
<feature type="strand" evidence="11">
    <location>
        <begin position="87"/>
        <end position="89"/>
    </location>
</feature>
<feature type="strand" evidence="11">
    <location>
        <begin position="92"/>
        <end position="95"/>
    </location>
</feature>
<feature type="helix" evidence="11">
    <location>
        <begin position="98"/>
        <end position="111"/>
    </location>
</feature>
<feature type="strand" evidence="11">
    <location>
        <begin position="115"/>
        <end position="118"/>
    </location>
</feature>
<feature type="strand" evidence="11">
    <location>
        <begin position="122"/>
        <end position="127"/>
    </location>
</feature>
<feature type="strand" evidence="11">
    <location>
        <begin position="132"/>
        <end position="136"/>
    </location>
</feature>
<feature type="strand" evidence="11">
    <location>
        <begin position="141"/>
        <end position="149"/>
    </location>
</feature>
<feature type="helix" evidence="11">
    <location>
        <begin position="156"/>
        <end position="161"/>
    </location>
</feature>
<feature type="strand" evidence="11">
    <location>
        <begin position="173"/>
        <end position="180"/>
    </location>
</feature>
<feature type="helix" evidence="11">
    <location>
        <begin position="185"/>
        <end position="195"/>
    </location>
</feature>
<feature type="turn" evidence="11">
    <location>
        <begin position="196"/>
        <end position="198"/>
    </location>
</feature>
<feature type="strand" evidence="11">
    <location>
        <begin position="203"/>
        <end position="206"/>
    </location>
</feature>
<feature type="strand" evidence="11">
    <location>
        <begin position="208"/>
        <end position="210"/>
    </location>
</feature>
<feature type="strand" evidence="11">
    <location>
        <begin position="212"/>
        <end position="217"/>
    </location>
</feature>
<feature type="helix" evidence="11">
    <location>
        <begin position="230"/>
        <end position="241"/>
    </location>
</feature>
<feature type="strand" evidence="11">
    <location>
        <begin position="248"/>
        <end position="257"/>
    </location>
</feature>
<feature type="strand" evidence="11">
    <location>
        <begin position="260"/>
        <end position="262"/>
    </location>
</feature>
<feature type="strand" evidence="11">
    <location>
        <begin position="266"/>
        <end position="268"/>
    </location>
</feature>
<feature type="strand" evidence="11">
    <location>
        <begin position="271"/>
        <end position="273"/>
    </location>
</feature>
<feature type="helix" evidence="11">
    <location>
        <begin position="275"/>
        <end position="277"/>
    </location>
</feature>
<feature type="turn" evidence="10">
    <location>
        <begin position="283"/>
        <end position="285"/>
    </location>
</feature>
<feature type="helix" evidence="11">
    <location>
        <begin position="288"/>
        <end position="307"/>
    </location>
</feature>
<feature type="turn" evidence="11">
    <location>
        <begin position="313"/>
        <end position="316"/>
    </location>
</feature>
<feature type="helix" evidence="11">
    <location>
        <begin position="317"/>
        <end position="340"/>
    </location>
</feature>
<feature type="helix" evidence="11">
    <location>
        <begin position="345"/>
        <end position="358"/>
    </location>
</feature>
<feature type="helix" evidence="11">
    <location>
        <begin position="361"/>
        <end position="371"/>
    </location>
</feature>
<feature type="turn" evidence="11">
    <location>
        <begin position="372"/>
        <end position="375"/>
    </location>
</feature>
<feature type="turn" evidence="11">
    <location>
        <begin position="385"/>
        <end position="388"/>
    </location>
</feature>
<feature type="strand" evidence="11">
    <location>
        <begin position="397"/>
        <end position="400"/>
    </location>
</feature>
<feature type="helix" evidence="11">
    <location>
        <begin position="401"/>
        <end position="404"/>
    </location>
</feature>
<feature type="strand" evidence="11">
    <location>
        <begin position="410"/>
        <end position="414"/>
    </location>
</feature>
<feature type="turn" evidence="11">
    <location>
        <begin position="425"/>
        <end position="427"/>
    </location>
</feature>
<feature type="strand" evidence="11">
    <location>
        <begin position="428"/>
        <end position="432"/>
    </location>
</feature>
<feature type="strand" evidence="11">
    <location>
        <begin position="439"/>
        <end position="445"/>
    </location>
</feature>
<feature type="strand" evidence="11">
    <location>
        <begin position="449"/>
        <end position="454"/>
    </location>
</feature>
<feature type="helix" evidence="11">
    <location>
        <begin position="458"/>
        <end position="469"/>
    </location>
</feature>
<proteinExistence type="evidence at protein level"/>
<comment type="function">
    <text evidence="1 3">Monooxygenase that can modify rifampicin, thereby inactivating its antibiotic activity (PubMed:19942945, PubMed:29578336). It constitutes a secondary rifampicin resistance factor (PubMed:19942945).</text>
</comment>
<comment type="catalytic activity">
    <reaction evidence="3">
        <text>rifampicin + NADPH + O2 = rifampicin para-naphthoquinone carboxamide + NADP(+) + H2O + H(+)</text>
        <dbReference type="Rhea" id="RHEA:58696"/>
        <dbReference type="ChEBI" id="CHEBI:15377"/>
        <dbReference type="ChEBI" id="CHEBI:15378"/>
        <dbReference type="ChEBI" id="CHEBI:15379"/>
        <dbReference type="ChEBI" id="CHEBI:57783"/>
        <dbReference type="ChEBI" id="CHEBI:58349"/>
        <dbReference type="ChEBI" id="CHEBI:71365"/>
        <dbReference type="ChEBI" id="CHEBI:142731"/>
        <dbReference type="EC" id="1.14.13.211"/>
    </reaction>
    <physiologicalReaction direction="left-to-right" evidence="3">
        <dbReference type="Rhea" id="RHEA:58697"/>
    </physiologicalReaction>
</comment>
<comment type="catalytic activity">
    <reaction evidence="3">
        <text>rifampicin + NADH + O2 = rifampicin para-naphthoquinone carboxamide + NAD(+) + H2O + H(+)</text>
        <dbReference type="Rhea" id="RHEA:58712"/>
        <dbReference type="ChEBI" id="CHEBI:15377"/>
        <dbReference type="ChEBI" id="CHEBI:15378"/>
        <dbReference type="ChEBI" id="CHEBI:15379"/>
        <dbReference type="ChEBI" id="CHEBI:57540"/>
        <dbReference type="ChEBI" id="CHEBI:57945"/>
        <dbReference type="ChEBI" id="CHEBI:71365"/>
        <dbReference type="ChEBI" id="CHEBI:142731"/>
        <dbReference type="EC" id="1.14.13.211"/>
    </reaction>
    <physiologicalReaction direction="left-to-right" evidence="3">
        <dbReference type="Rhea" id="RHEA:58713"/>
    </physiologicalReaction>
</comment>
<comment type="cofactor">
    <cofactor evidence="2 3">
        <name>FAD</name>
        <dbReference type="ChEBI" id="CHEBI:57692"/>
    </cofactor>
</comment>
<comment type="subunit">
    <text evidence="2">Homodimer.</text>
</comment>
<comment type="domain">
    <text evidence="2">Contains three domains: a FAD-binding domain, a middle domain, and a C-terminal domain (PubMed:27557658). The middle domain forms a cap over the FAD-binding domain and is involved in binding rifampicin (PubMed:27557658).</text>
</comment>
<comment type="disruption phenotype">
    <text evidence="1">No visible effect on rifampicin resistance.</text>
</comment>
<comment type="similarity">
    <text evidence="5">Belongs to the rifampicin monooxygenase family.</text>
</comment>
<comment type="caution">
    <text evidence="3 6">Was initially characterized as an N-monooxygenase proposed to hydroxylate rifampicin at the N2' atom to produce 2'-N-hydroxyrifampicin. Later structural studies showed that RIFMO catalyzes a different reaction involving monooxygenation of position 2 of the naphthyl group, followed by linearization of the antibiotic (PubMed:29578336).</text>
</comment>
<gene>
    <name evidence="4" type="primary">rox</name>
    <name type="ordered locus">NFA_35380</name>
</gene>
<dbReference type="EC" id="1.14.13.211" evidence="3"/>
<dbReference type="EMBL" id="AP006618">
    <property type="protein sequence ID" value="BAD58386.1"/>
    <property type="molecule type" value="Genomic_DNA"/>
</dbReference>
<dbReference type="RefSeq" id="WP_011210071.1">
    <property type="nucleotide sequence ID" value="NG_052045.1"/>
</dbReference>
<dbReference type="PDB" id="5KOW">
    <property type="method" value="X-ray"/>
    <property type="resolution" value="2.10 A"/>
    <property type="chains" value="A=1-473"/>
</dbReference>
<dbReference type="PDB" id="5KOX">
    <property type="method" value="X-ray"/>
    <property type="resolution" value="1.80 A"/>
    <property type="chains" value="A=1-473"/>
</dbReference>
<dbReference type="PDB" id="6C7S">
    <property type="method" value="X-ray"/>
    <property type="resolution" value="2.10 A"/>
    <property type="chains" value="A=1-473"/>
</dbReference>
<dbReference type="PDBsum" id="5KOW"/>
<dbReference type="PDBsum" id="5KOX"/>
<dbReference type="PDBsum" id="6C7S"/>
<dbReference type="SMR" id="Q5YTV5"/>
<dbReference type="STRING" id="247156.NFA_35380"/>
<dbReference type="CARD" id="ARO:3007210">
    <property type="molecule name" value="Nfar_rox"/>
    <property type="mechanism identifier" value="ARO:0001004"/>
    <property type="mechanism name" value="antibiotic inactivation"/>
</dbReference>
<dbReference type="GeneID" id="61134239"/>
<dbReference type="KEGG" id="nfa:NFA_35380"/>
<dbReference type="eggNOG" id="COG0654">
    <property type="taxonomic scope" value="Bacteria"/>
</dbReference>
<dbReference type="HOGENOM" id="CLU_009665_20_1_11"/>
<dbReference type="OrthoDB" id="8670884at2"/>
<dbReference type="BRENDA" id="1.14.13.211">
    <property type="organism ID" value="10091"/>
</dbReference>
<dbReference type="Proteomes" id="UP000006820">
    <property type="component" value="Chromosome"/>
</dbReference>
<dbReference type="GO" id="GO:0071949">
    <property type="term" value="F:FAD binding"/>
    <property type="evidence" value="ECO:0007669"/>
    <property type="project" value="InterPro"/>
</dbReference>
<dbReference type="GO" id="GO:0016709">
    <property type="term" value="F:oxidoreductase activity, acting on paired donors, with incorporation or reduction of molecular oxygen, NAD(P)H as one donor, and incorporation of one atom of oxygen"/>
    <property type="evidence" value="ECO:0007669"/>
    <property type="project" value="UniProtKB-ARBA"/>
</dbReference>
<dbReference type="Gene3D" id="3.30.70.2450">
    <property type="match status" value="1"/>
</dbReference>
<dbReference type="Gene3D" id="3.40.30.120">
    <property type="match status" value="1"/>
</dbReference>
<dbReference type="Gene3D" id="3.50.50.60">
    <property type="entry name" value="FAD/NAD(P)-binding domain"/>
    <property type="match status" value="1"/>
</dbReference>
<dbReference type="InterPro" id="IPR002938">
    <property type="entry name" value="FAD-bd"/>
</dbReference>
<dbReference type="InterPro" id="IPR036188">
    <property type="entry name" value="FAD/NAD-bd_sf"/>
</dbReference>
<dbReference type="InterPro" id="IPR050641">
    <property type="entry name" value="RIFMO-like"/>
</dbReference>
<dbReference type="NCBIfam" id="NF033145">
    <property type="entry name" value="rif_monoox"/>
    <property type="match status" value="1"/>
</dbReference>
<dbReference type="PANTHER" id="PTHR43004:SF19">
    <property type="entry name" value="BINDING MONOOXYGENASE, PUTATIVE (JCVI)-RELATED"/>
    <property type="match status" value="1"/>
</dbReference>
<dbReference type="PANTHER" id="PTHR43004">
    <property type="entry name" value="TRK SYSTEM POTASSIUM UPTAKE PROTEIN"/>
    <property type="match status" value="1"/>
</dbReference>
<dbReference type="Pfam" id="PF01494">
    <property type="entry name" value="FAD_binding_3"/>
    <property type="match status" value="1"/>
</dbReference>
<dbReference type="Pfam" id="PF21274">
    <property type="entry name" value="Rng_hyd_C"/>
    <property type="match status" value="1"/>
</dbReference>
<dbReference type="PRINTS" id="PR00420">
    <property type="entry name" value="RNGMNOXGNASE"/>
</dbReference>
<dbReference type="SUPFAM" id="SSF51905">
    <property type="entry name" value="FAD/NAD(P)-binding domain"/>
    <property type="match status" value="1"/>
</dbReference>